<comment type="function">
    <text evidence="2 4 7 10">Functions in both vacuole inheritance and protein targeting from the cytoplasm to vacuole (cvt) (PubMed:9490720). Involved in the formation of nucleus-vacuole junctions (NVJs) during piecemeal microautophagy of the nucleus (PMN) (PubMed:10888680, PubMed:12529432, PubMed:16912077). NVJs are interorganelle interfaces mediated by NVJ1 in the nuclear envelope and VAC8 on the vacuole membrane (PubMed:10888680, PubMed:12529432, PubMed:16912077). Together, NVJ1 and VAC8 form Velcro-like patches through which teardrop-like portions of the nucleus are pinched off into the vacuolar lumen and degraded by the PMN process (PubMed:10888680, PubMed:12529432, PubMed:16912077).</text>
</comment>
<comment type="subunit">
    <text evidence="2 7 8 9">Interacts with NVJ1 (PubMed:10888680, PubMed:16912077, PubMed:28533415). Forms heterotetramers of two VAC8 and two NVJ1 or two VAC8 and two ATG13 (PubMed:31512555).</text>
</comment>
<comment type="interaction">
    <interactant intactId="EBI-20212">
        <id>P39968</id>
    </interactant>
    <interactant intactId="EBI-36188">
        <id>Q06628</id>
        <label>ATG13</label>
    </interactant>
    <organismsDiffer>false</organismsDiffer>
    <experiments>7</experiments>
</comment>
<comment type="interaction">
    <interactant intactId="EBI-20212">
        <id>P39968</id>
    </interactant>
    <interactant intactId="EBI-24885">
        <id>P38881</id>
        <label>NVJ1</label>
    </interactant>
    <organismsDiffer>false</organismsDiffer>
    <experiments>10</experiments>
</comment>
<comment type="interaction">
    <interactant intactId="EBI-20212">
        <id>P39968</id>
    </interactant>
    <interactant intactId="EBI-22275">
        <id>P40003</id>
        <label>VAB2</label>
    </interactant>
    <organismsDiffer>false</organismsDiffer>
    <experiments>3</experiments>
</comment>
<comment type="interaction">
    <interactant intactId="EBI-20212">
        <id>P39968</id>
    </interactant>
    <interactant intactId="EBI-21800">
        <id>P25591</id>
        <label>VAC17</label>
    </interactant>
    <organismsDiffer>false</organismsDiffer>
    <experiments>3</experiments>
</comment>
<comment type="interaction">
    <interactant intactId="EBI-20212">
        <id>P39968</id>
    </interactant>
    <interactant intactId="EBI-20212">
        <id>P39968</id>
        <label>VAC8</label>
    </interactant>
    <organismsDiffer>false</organismsDiffer>
    <experiments>2</experiments>
</comment>
<comment type="subcellular location">
    <subcellularLocation>
        <location evidence="2 10">Vacuole membrane</location>
        <topology evidence="10">Lipid-anchor</topology>
    </subcellularLocation>
    <text evidence="2">Localizes at sites of nucleus-vacuole junctions.</text>
</comment>
<comment type="domain">
    <text evidence="8">Comprises a flexibly connected N-terminal H1 helix followed by armadillo repeats (ARMs) that form a right-handed superhelical structure.</text>
</comment>
<comment type="domain">
    <text evidence="8 9">the H1 helix directly interacts with ARM1 and hinders the dimeric interface (PubMed:28533415, PubMed:31512555). ARM1 serves as a binding interface for the formation of the 2-fold dimer of VAC8, which is crucial for heterotetramer formation with either NVJ1 or ATG13 and subsequent PMN and Cvt pathways (PubMed:28533415, PubMed:31512555).</text>
</comment>
<comment type="domain">
    <text evidence="8 9">The highly conserved innergroove formed by the ARMs specifically binds the extended 80 Angstroms-longloop of NVJ1 (PubMed:28533415). The ARMs domain also binds the he 70 Angstroms extended loop of ATG13 in an antiparallel manner (PubMed:31512555).</text>
</comment>
<comment type="PTM">
    <text evidence="3 6 10">Palmitoylated on one or more of its N-terminal cysteine residues by PFA3, which is required for vacuole fusion.</text>
</comment>
<comment type="miscellaneous">
    <text evidence="5">Present with 5680 molecules/cell in log phase SD medium.</text>
</comment>
<comment type="similarity">
    <text evidence="11">Belongs to the beta-catenin family.</text>
</comment>
<dbReference type="EMBL" id="AF005267">
    <property type="protein sequence ID" value="AAQ13402.1"/>
    <property type="molecule type" value="mRNA"/>
</dbReference>
<dbReference type="EMBL" id="U18530">
    <property type="protein sequence ID" value="AAB64490.1"/>
    <property type="molecule type" value="Genomic_DNA"/>
</dbReference>
<dbReference type="EMBL" id="BK006939">
    <property type="protein sequence ID" value="DAA07640.1"/>
    <property type="molecule type" value="Genomic_DNA"/>
</dbReference>
<dbReference type="PIR" id="S50446">
    <property type="entry name" value="S50446"/>
</dbReference>
<dbReference type="RefSeq" id="NP_010903.3">
    <property type="nucleotide sequence ID" value="NM_001178828.3"/>
</dbReference>
<dbReference type="PDB" id="5XJG">
    <property type="method" value="X-ray"/>
    <property type="resolution" value="2.40 A"/>
    <property type="chains" value="A/C=10-515"/>
</dbReference>
<dbReference type="PDB" id="6KBM">
    <property type="method" value="X-ray"/>
    <property type="resolution" value="2.90 A"/>
    <property type="chains" value="A=10-515"/>
</dbReference>
<dbReference type="PDB" id="6KBN">
    <property type="method" value="X-ray"/>
    <property type="resolution" value="3.20 A"/>
    <property type="chains" value="A/C=1-578"/>
</dbReference>
<dbReference type="PDB" id="7YCJ">
    <property type="method" value="X-ray"/>
    <property type="resolution" value="2.10 A"/>
    <property type="chains" value="A=9-515"/>
</dbReference>
<dbReference type="PDBsum" id="5XJG"/>
<dbReference type="PDBsum" id="6KBM"/>
<dbReference type="PDBsum" id="6KBN"/>
<dbReference type="PDBsum" id="7YCJ"/>
<dbReference type="SMR" id="P39968"/>
<dbReference type="BioGRID" id="36717">
    <property type="interactions" value="377"/>
</dbReference>
<dbReference type="ComplexPortal" id="CPX-1304">
    <property type="entry name" value="MYO2-VAC17-VAC8 transport complex"/>
</dbReference>
<dbReference type="ComplexPortal" id="CPX-1381">
    <property type="entry name" value="NVJ1-VAC8 nucleus-vacuole junction complex"/>
</dbReference>
<dbReference type="DIP" id="DIP-5121N"/>
<dbReference type="FunCoup" id="P39968">
    <property type="interactions" value="163"/>
</dbReference>
<dbReference type="IntAct" id="P39968">
    <property type="interactions" value="53"/>
</dbReference>
<dbReference type="MINT" id="P39968"/>
<dbReference type="STRING" id="4932.YEL013W"/>
<dbReference type="iPTMnet" id="P39968"/>
<dbReference type="SwissPalm" id="P39968"/>
<dbReference type="PaxDb" id="4932-YEL013W"/>
<dbReference type="PeptideAtlas" id="P39968"/>
<dbReference type="EnsemblFungi" id="YEL013W_mRNA">
    <property type="protein sequence ID" value="YEL013W"/>
    <property type="gene ID" value="YEL013W"/>
</dbReference>
<dbReference type="GeneID" id="856702"/>
<dbReference type="KEGG" id="sce:YEL013W"/>
<dbReference type="AGR" id="SGD:S000000739"/>
<dbReference type="SGD" id="S000000739">
    <property type="gene designation" value="VAC8"/>
</dbReference>
<dbReference type="VEuPathDB" id="FungiDB:YEL013W"/>
<dbReference type="eggNOG" id="KOG4224">
    <property type="taxonomic scope" value="Eukaryota"/>
</dbReference>
<dbReference type="GeneTree" id="ENSGT00940000167949"/>
<dbReference type="HOGENOM" id="CLU_021483_0_0_1"/>
<dbReference type="InParanoid" id="P39968"/>
<dbReference type="OMA" id="VWDKPDG"/>
<dbReference type="OrthoDB" id="7537227at2759"/>
<dbReference type="BioCyc" id="YEAST:G3O-30139-MONOMER"/>
<dbReference type="BioGRID-ORCS" id="856702">
    <property type="hits" value="0 hits in 10 CRISPR screens"/>
</dbReference>
<dbReference type="PRO" id="PR:P39968"/>
<dbReference type="Proteomes" id="UP000002311">
    <property type="component" value="Chromosome V"/>
</dbReference>
<dbReference type="RNAct" id="P39968">
    <property type="molecule type" value="protein"/>
</dbReference>
<dbReference type="GO" id="GO:0005829">
    <property type="term" value="C:cytosol"/>
    <property type="evidence" value="ECO:0007005"/>
    <property type="project" value="SGD"/>
</dbReference>
<dbReference type="GO" id="GO:0000329">
    <property type="term" value="C:fungal-type vacuole membrane"/>
    <property type="evidence" value="ECO:0000314"/>
    <property type="project" value="ComplexPortal"/>
</dbReference>
<dbReference type="GO" id="GO:0016020">
    <property type="term" value="C:membrane"/>
    <property type="evidence" value="ECO:0000314"/>
    <property type="project" value="SGD"/>
</dbReference>
<dbReference type="GO" id="GO:0045121">
    <property type="term" value="C:membrane raft"/>
    <property type="evidence" value="ECO:0000314"/>
    <property type="project" value="SGD"/>
</dbReference>
<dbReference type="GO" id="GO:0071563">
    <property type="term" value="C:Myo2p-Vac17p-Vac8p transport complex"/>
    <property type="evidence" value="ECO:0000314"/>
    <property type="project" value="SGD"/>
</dbReference>
<dbReference type="GO" id="GO:0031965">
    <property type="term" value="C:nuclear membrane"/>
    <property type="evidence" value="ECO:0000314"/>
    <property type="project" value="SGD"/>
</dbReference>
<dbReference type="GO" id="GO:0005640">
    <property type="term" value="C:nuclear outer membrane"/>
    <property type="evidence" value="ECO:0000303"/>
    <property type="project" value="ComplexPortal"/>
</dbReference>
<dbReference type="GO" id="GO:0071561">
    <property type="term" value="C:nucleus-vacuole junction"/>
    <property type="evidence" value="ECO:0000314"/>
    <property type="project" value="SGD"/>
</dbReference>
<dbReference type="GO" id="GO:0000407">
    <property type="term" value="C:phagophore assembly site"/>
    <property type="evidence" value="ECO:0000315"/>
    <property type="project" value="SGD"/>
</dbReference>
<dbReference type="GO" id="GO:0042802">
    <property type="term" value="F:identical protein binding"/>
    <property type="evidence" value="ECO:0000353"/>
    <property type="project" value="IntAct"/>
</dbReference>
<dbReference type="GO" id="GO:0043495">
    <property type="term" value="F:protein-membrane adaptor activity"/>
    <property type="evidence" value="ECO:0000315"/>
    <property type="project" value="SGD"/>
</dbReference>
<dbReference type="GO" id="GO:0000045">
    <property type="term" value="P:autophagosome assembly"/>
    <property type="evidence" value="ECO:0000315"/>
    <property type="project" value="SGD"/>
</dbReference>
<dbReference type="GO" id="GO:0006914">
    <property type="term" value="P:autophagy"/>
    <property type="evidence" value="ECO:0000314"/>
    <property type="project" value="SGD"/>
</dbReference>
<dbReference type="GO" id="GO:0071255">
    <property type="term" value="P:Cvt vesicle assembly"/>
    <property type="evidence" value="ECO:0000315"/>
    <property type="project" value="SGD"/>
</dbReference>
<dbReference type="GO" id="GO:0051656">
    <property type="term" value="P:establishment of organelle localization"/>
    <property type="evidence" value="ECO:0000315"/>
    <property type="project" value="SGD"/>
</dbReference>
<dbReference type="GO" id="GO:0006629">
    <property type="term" value="P:lipid metabolic process"/>
    <property type="evidence" value="ECO:0000303"/>
    <property type="project" value="ComplexPortal"/>
</dbReference>
<dbReference type="GO" id="GO:0016236">
    <property type="term" value="P:macroautophagy"/>
    <property type="evidence" value="ECO:0000315"/>
    <property type="project" value="SGD"/>
</dbReference>
<dbReference type="GO" id="GO:0071562">
    <property type="term" value="P:nucleus-vacuole junction assembly"/>
    <property type="evidence" value="ECO:0000315"/>
    <property type="project" value="SGD"/>
</dbReference>
<dbReference type="GO" id="GO:0000425">
    <property type="term" value="P:pexophagy"/>
    <property type="evidence" value="ECO:0000314"/>
    <property type="project" value="SGD"/>
</dbReference>
<dbReference type="GO" id="GO:0034727">
    <property type="term" value="P:piecemeal microautophagy of the nucleus"/>
    <property type="evidence" value="ECO:0000315"/>
    <property type="project" value="SGD"/>
</dbReference>
<dbReference type="GO" id="GO:1903044">
    <property type="term" value="P:protein localization to membrane raft"/>
    <property type="evidence" value="ECO:0000315"/>
    <property type="project" value="SGD"/>
</dbReference>
<dbReference type="GO" id="GO:0034497">
    <property type="term" value="P:protein localization to phagophore assembly site"/>
    <property type="evidence" value="ECO:0000315"/>
    <property type="project" value="SGD"/>
</dbReference>
<dbReference type="GO" id="GO:0031503">
    <property type="term" value="P:protein-containing complex localization"/>
    <property type="evidence" value="ECO:0000315"/>
    <property type="project" value="SGD"/>
</dbReference>
<dbReference type="GO" id="GO:0034517">
    <property type="term" value="P:ribophagy"/>
    <property type="evidence" value="ECO:0000314"/>
    <property type="project" value="SGD"/>
</dbReference>
<dbReference type="GO" id="GO:0042144">
    <property type="term" value="P:vacuole fusion, non-autophagic"/>
    <property type="evidence" value="ECO:0000315"/>
    <property type="project" value="SGD"/>
</dbReference>
<dbReference type="GO" id="GO:0000011">
    <property type="term" value="P:vacuole inheritance"/>
    <property type="evidence" value="ECO:0000314"/>
    <property type="project" value="ComplexPortal"/>
</dbReference>
<dbReference type="FunFam" id="1.25.10.10:FF:000470">
    <property type="entry name" value="Vacuolar protein 8"/>
    <property type="match status" value="1"/>
</dbReference>
<dbReference type="Gene3D" id="1.25.10.10">
    <property type="entry name" value="Leucine-rich Repeat Variant"/>
    <property type="match status" value="2"/>
</dbReference>
<dbReference type="InterPro" id="IPR011989">
    <property type="entry name" value="ARM-like"/>
</dbReference>
<dbReference type="InterPro" id="IPR016024">
    <property type="entry name" value="ARM-type_fold"/>
</dbReference>
<dbReference type="InterPro" id="IPR000225">
    <property type="entry name" value="Armadillo"/>
</dbReference>
<dbReference type="InterPro" id="IPR045156">
    <property type="entry name" value="Vac8"/>
</dbReference>
<dbReference type="PANTHER" id="PTHR47249">
    <property type="entry name" value="VACUOLAR PROTEIN 8"/>
    <property type="match status" value="1"/>
</dbReference>
<dbReference type="PANTHER" id="PTHR47249:SF1">
    <property type="entry name" value="VACUOLAR PROTEIN 8"/>
    <property type="match status" value="1"/>
</dbReference>
<dbReference type="Pfam" id="PF00514">
    <property type="entry name" value="Arm"/>
    <property type="match status" value="8"/>
</dbReference>
<dbReference type="SMART" id="SM00185">
    <property type="entry name" value="ARM"/>
    <property type="match status" value="9"/>
</dbReference>
<dbReference type="SUPFAM" id="SSF48371">
    <property type="entry name" value="ARM repeat"/>
    <property type="match status" value="1"/>
</dbReference>
<dbReference type="PROSITE" id="PS50176">
    <property type="entry name" value="ARM_REPEAT"/>
    <property type="match status" value="7"/>
</dbReference>
<proteinExistence type="evidence at protein level"/>
<reference key="1">
    <citation type="submission" date="1997-05" db="EMBL/GenBank/DDBJ databases">
        <title>New members of the plakoglobin/armadillo/beta-catenin family characterized by armadillo repeats.</title>
        <authorList>
            <person name="Fischer R."/>
        </authorList>
    </citation>
    <scope>NUCLEOTIDE SEQUENCE [MRNA]</scope>
</reference>
<reference key="2">
    <citation type="journal article" date="1997" name="Nature">
        <title>The nucleotide sequence of Saccharomyces cerevisiae chromosome V.</title>
        <authorList>
            <person name="Dietrich F.S."/>
            <person name="Mulligan J.T."/>
            <person name="Hennessy K.M."/>
            <person name="Yelton M.A."/>
            <person name="Allen E."/>
            <person name="Araujo R."/>
            <person name="Aviles E."/>
            <person name="Berno A."/>
            <person name="Brennan T."/>
            <person name="Carpenter J."/>
            <person name="Chen E."/>
            <person name="Cherry J.M."/>
            <person name="Chung E."/>
            <person name="Duncan M."/>
            <person name="Guzman E."/>
            <person name="Hartzell G."/>
            <person name="Hunicke-Smith S."/>
            <person name="Hyman R.W."/>
            <person name="Kayser A."/>
            <person name="Komp C."/>
            <person name="Lashkari D."/>
            <person name="Lew H."/>
            <person name="Lin D."/>
            <person name="Mosedale D."/>
            <person name="Nakahara K."/>
            <person name="Namath A."/>
            <person name="Norgren R."/>
            <person name="Oefner P."/>
            <person name="Oh C."/>
            <person name="Petel F.X."/>
            <person name="Roberts D."/>
            <person name="Sehl P."/>
            <person name="Schramm S."/>
            <person name="Shogren T."/>
            <person name="Smith V."/>
            <person name="Taylor P."/>
            <person name="Wei Y."/>
            <person name="Botstein D."/>
            <person name="Davis R.W."/>
        </authorList>
    </citation>
    <scope>NUCLEOTIDE SEQUENCE [LARGE SCALE GENOMIC DNA]</scope>
    <source>
        <strain>ATCC 204508 / S288c</strain>
    </source>
</reference>
<reference key="3">
    <citation type="journal article" date="2014" name="G3 (Bethesda)">
        <title>The reference genome sequence of Saccharomyces cerevisiae: Then and now.</title>
        <authorList>
            <person name="Engel S.R."/>
            <person name="Dietrich F.S."/>
            <person name="Fisk D.G."/>
            <person name="Binkley G."/>
            <person name="Balakrishnan R."/>
            <person name="Costanzo M.C."/>
            <person name="Dwight S.S."/>
            <person name="Hitz B.C."/>
            <person name="Karra K."/>
            <person name="Nash R.S."/>
            <person name="Weng S."/>
            <person name="Wong E.D."/>
            <person name="Lloyd P."/>
            <person name="Skrzypek M.S."/>
            <person name="Miyasato S.R."/>
            <person name="Simison M."/>
            <person name="Cherry J.M."/>
        </authorList>
    </citation>
    <scope>GENOME REANNOTATION</scope>
    <source>
        <strain>ATCC 204508 / S288c</strain>
    </source>
</reference>
<reference key="4">
    <citation type="journal article" date="1998" name="J. Cell Biol.">
        <title>Vac8p, a vacuolar protein with armadillo repeats, functions in both vacuole inheritance and protein targeting from the cytoplasm to vacuole.</title>
        <authorList>
            <person name="Wang Y.-X."/>
            <person name="Catlett N.L."/>
            <person name="Weisman L.S."/>
        </authorList>
    </citation>
    <scope>FUNCTION</scope>
    <scope>MYRISTOYLATION AT GLY-2</scope>
    <scope>PALMITOYLATION AT CYS-4; CYS-5 AND CYS-7</scope>
    <scope>MUTAGENESIS OF 4-CYS--CYS-7</scope>
    <scope>SUBCELLULAR LOCATION</scope>
</reference>
<reference key="5">
    <citation type="journal article" date="2000" name="J. Biol. Chem.">
        <title>Apg13p and Vac8p are part of a complex of phosphoproteins that are required for cytoplasm to vacuole targeting.</title>
        <authorList>
            <person name="Scott S.V."/>
            <person name="Nice D.C. III"/>
            <person name="Nau J.J."/>
            <person name="Weisman L.S."/>
            <person name="Kamada Y."/>
            <person name="Keizer-Gunnink I."/>
            <person name="Funakoshi T."/>
            <person name="Veenhuis M."/>
            <person name="Ohsumi Y."/>
            <person name="Klionsky D.J."/>
        </authorList>
    </citation>
    <scope>PHOSPHORYLATION</scope>
    <scope>INTERACTION WITH ATG13</scope>
</reference>
<reference key="6">
    <citation type="journal article" date="2000" name="Mol. Biol. Cell">
        <title>Nucleus-vacuole junctions in Saccharomyces cerevisiae are formed through the direct interaction of Vac8p with Nvj1p.</title>
        <authorList>
            <person name="Pan X."/>
            <person name="Roberts P."/>
            <person name="Chen Y."/>
            <person name="Kvam E."/>
            <person name="Shulga N."/>
            <person name="Huang K."/>
            <person name="Lemmon S."/>
            <person name="Goldfarb D.S."/>
        </authorList>
    </citation>
    <scope>INTERACTION WITH NVJ1</scope>
    <scope>SUBCELLULAR LOCATION</scope>
    <scope>FUNCTION</scope>
</reference>
<reference key="7">
    <citation type="journal article" date="2001" name="EMBO J.">
        <title>Vac8p release from the SNARE complex and its palmitoylation are coupled and essential for vacuole fusion.</title>
        <authorList>
            <person name="Veit M."/>
            <person name="Laage R."/>
            <person name="Dietrich L."/>
            <person name="Wang L."/>
            <person name="Ungermann C."/>
        </authorList>
    </citation>
    <scope>PALMITOYLATION</scope>
</reference>
<reference key="8">
    <citation type="journal article" date="2003" name="Mol. Biol. Cell">
        <title>Piecemeal microautophagy of nucleus in Saccharomyces cerevisiae.</title>
        <authorList>
            <person name="Roberts P."/>
            <person name="Moshitch-Moshkovitz S."/>
            <person name="Kvam E."/>
            <person name="O'Toole E."/>
            <person name="Winey M."/>
            <person name="Goldfarb D.S."/>
        </authorList>
    </citation>
    <scope>FUNCTION</scope>
</reference>
<reference key="9">
    <citation type="journal article" date="2003" name="Nature">
        <title>Global analysis of protein expression in yeast.</title>
        <authorList>
            <person name="Ghaemmaghami S."/>
            <person name="Huh W.-K."/>
            <person name="Bower K."/>
            <person name="Howson R.W."/>
            <person name="Belle A."/>
            <person name="Dephoure N."/>
            <person name="O'Shea E.K."/>
            <person name="Weissman J.S."/>
        </authorList>
    </citation>
    <scope>LEVEL OF PROTEIN EXPRESSION [LARGE SCALE ANALYSIS]</scope>
</reference>
<reference key="10">
    <citation type="journal article" date="2005" name="J. Cell Biol.">
        <title>The vacuolar DHHC-CRD protein Pfa3p is a protein acyltransferase for Vac8p.</title>
        <authorList>
            <person name="Smotrys J.E."/>
            <person name="Schoenfish M.J."/>
            <person name="Stutz M.A."/>
            <person name="Linder M.E."/>
        </authorList>
    </citation>
    <scope>PALMITOYLATION</scope>
</reference>
<reference key="11">
    <citation type="journal article" date="2006" name="J. Cell Sci.">
        <title>Structure and function of nucleus-vacuole junctions: outer-nuclear-membrane targeting of Nvj1p and a role in tryptophan uptake.</title>
        <authorList>
            <person name="Kvam E."/>
            <person name="Goldfarb D.S."/>
        </authorList>
    </citation>
    <scope>FUNCTION</scope>
    <scope>INTERACTION WITH NVJ1</scope>
</reference>
<reference key="12">
    <citation type="journal article" date="2007" name="J. Proteome Res.">
        <title>Large-scale phosphorylation analysis of alpha-factor-arrested Saccharomyces cerevisiae.</title>
        <authorList>
            <person name="Li X."/>
            <person name="Gerber S.A."/>
            <person name="Rudner A.D."/>
            <person name="Beausoleil S.A."/>
            <person name="Haas W."/>
            <person name="Villen J."/>
            <person name="Elias J.E."/>
            <person name="Gygi S.P."/>
        </authorList>
    </citation>
    <scope>PHOSPHORYLATION [LARGE SCALE ANALYSIS] AT SER-16</scope>
    <scope>IDENTIFICATION BY MASS SPECTROMETRY [LARGE SCALE ANALYSIS]</scope>
    <source>
        <strain>ADR376</strain>
    </source>
</reference>
<reference key="13">
    <citation type="journal article" date="2008" name="Mol. Cell. Proteomics">
        <title>A multidimensional chromatography technology for in-depth phosphoproteome analysis.</title>
        <authorList>
            <person name="Albuquerque C.P."/>
            <person name="Smolka M.B."/>
            <person name="Payne S.H."/>
            <person name="Bafna V."/>
            <person name="Eng J."/>
            <person name="Zhou H."/>
        </authorList>
    </citation>
    <scope>PHOSPHORYLATION [LARGE SCALE ANALYSIS] AT SER-16</scope>
    <scope>IDENTIFICATION BY MASS SPECTROMETRY [LARGE SCALE ANALYSIS]</scope>
</reference>
<reference key="14">
    <citation type="journal article" date="2009" name="Science">
        <title>Global analysis of Cdk1 substrate phosphorylation sites provides insights into evolution.</title>
        <authorList>
            <person name="Holt L.J."/>
            <person name="Tuch B.B."/>
            <person name="Villen J."/>
            <person name="Johnson A.D."/>
            <person name="Gygi S.P."/>
            <person name="Morgan D.O."/>
        </authorList>
    </citation>
    <scope>PHOSPHORYLATION [LARGE SCALE ANALYSIS] AT SER-11 AND SER-16</scope>
    <scope>IDENTIFICATION BY MASS SPECTROMETRY [LARGE SCALE ANALYSIS]</scope>
</reference>
<reference key="15">
    <citation type="journal article" date="2012" name="Proteomics">
        <title>Sites of ubiquitin attachment in Saccharomyces cerevisiae.</title>
        <authorList>
            <person name="Starita L.M."/>
            <person name="Lo R.S."/>
            <person name="Eng J.K."/>
            <person name="von Haller P.D."/>
            <person name="Fields S."/>
        </authorList>
    </citation>
    <scope>UBIQUITINATION [LARGE SCALE ANALYSIS] AT LYS-77 AND LYS-515</scope>
    <scope>IDENTIFICATION BY MASS SPECTROMETRY [LARGE SCALE ANALYSIS]</scope>
</reference>
<reference evidence="13" key="16">
    <citation type="journal article" date="2017" name="Proc. Natl. Acad. Sci. U.S.A.">
        <title>Mechanistic insight into the nucleus-vacuole junction based on the Vac8p-Nvj1p crystal structure.</title>
        <authorList>
            <person name="Jeong H."/>
            <person name="Park J."/>
            <person name="Kim H.I."/>
            <person name="Lee M."/>
            <person name="Ko Y.J."/>
            <person name="Lee S."/>
            <person name="Jun Y."/>
            <person name="Lee C."/>
        </authorList>
    </citation>
    <scope>X-RAY CRYSTALLOGRAPHY (2.40 ANGSTROMS) OF 10-515 IN COMPLEX WITH NVJ1</scope>
    <scope>FUNCTION</scope>
    <scope>DOMAIN</scope>
    <scope>INTERACTION WITH NVJ1</scope>
</reference>
<reference evidence="14 15" key="17">
    <citation type="journal article" date="2020" name="Autophagy">
        <title>Quaternary structures of Vac8 differentially regulate the Cvt and PMN pathways.</title>
        <authorList>
            <person name="Park J."/>
            <person name="Kim H.I."/>
            <person name="Jeong H."/>
            <person name="Lee M."/>
            <person name="Jang S.H."/>
            <person name="Yoon S.Y."/>
            <person name="Kim H."/>
            <person name="Park Z.Y."/>
            <person name="Jun Y."/>
            <person name="Lee C."/>
        </authorList>
    </citation>
    <scope>X-RAY CRYSTALLOGRAPHY (2.90 ANGSTROMS) OF 10-515 IN COMPLEX WITH ATG13</scope>
    <scope>INTERACTION WITH ATG13 AND NJJ1</scope>
    <scope>DOMAIN</scope>
    <scope>SUBUNIT</scope>
    <scope>MUTAGENESIS OF ALA-51; ASN-60 AND ASN-62</scope>
</reference>
<accession>P39968</accession>
<accession>D3DLN6</accession>
<accession>Q549T0</accession>
<keyword id="KW-0002">3D-structure</keyword>
<keyword id="KW-1017">Isopeptide bond</keyword>
<keyword id="KW-0449">Lipoprotein</keyword>
<keyword id="KW-0472">Membrane</keyword>
<keyword id="KW-0519">Myristate</keyword>
<keyword id="KW-0564">Palmitate</keyword>
<keyword id="KW-0597">Phosphoprotein</keyword>
<keyword id="KW-1185">Reference proteome</keyword>
<keyword id="KW-0677">Repeat</keyword>
<keyword id="KW-0832">Ubl conjugation</keyword>
<keyword id="KW-0926">Vacuole</keyword>
<gene>
    <name type="primary">VAC8</name>
    <name type="synonym">YEB3</name>
    <name type="ordered locus">YEL013W</name>
</gene>
<organism>
    <name type="scientific">Saccharomyces cerevisiae (strain ATCC 204508 / S288c)</name>
    <name type="common">Baker's yeast</name>
    <dbReference type="NCBI Taxonomy" id="559292"/>
    <lineage>
        <taxon>Eukaryota</taxon>
        <taxon>Fungi</taxon>
        <taxon>Dikarya</taxon>
        <taxon>Ascomycota</taxon>
        <taxon>Saccharomycotina</taxon>
        <taxon>Saccharomycetes</taxon>
        <taxon>Saccharomycetales</taxon>
        <taxon>Saccharomycetaceae</taxon>
        <taxon>Saccharomyces</taxon>
    </lineage>
</organism>
<name>VAC8_YEAST</name>
<evidence type="ECO:0000256" key="1">
    <source>
        <dbReference type="SAM" id="MobiDB-lite"/>
    </source>
</evidence>
<evidence type="ECO:0000269" key="2">
    <source>
    </source>
</evidence>
<evidence type="ECO:0000269" key="3">
    <source>
    </source>
</evidence>
<evidence type="ECO:0000269" key="4">
    <source>
    </source>
</evidence>
<evidence type="ECO:0000269" key="5">
    <source>
    </source>
</evidence>
<evidence type="ECO:0000269" key="6">
    <source>
    </source>
</evidence>
<evidence type="ECO:0000269" key="7">
    <source>
    </source>
</evidence>
<evidence type="ECO:0000269" key="8">
    <source>
    </source>
</evidence>
<evidence type="ECO:0000269" key="9">
    <source>
    </source>
</evidence>
<evidence type="ECO:0000269" key="10">
    <source>
    </source>
</evidence>
<evidence type="ECO:0000305" key="11"/>
<evidence type="ECO:0000305" key="12">
    <source>
    </source>
</evidence>
<evidence type="ECO:0007744" key="13">
    <source>
        <dbReference type="PDB" id="5XJG"/>
    </source>
</evidence>
<evidence type="ECO:0007744" key="14">
    <source>
        <dbReference type="PDB" id="6KBM"/>
    </source>
</evidence>
<evidence type="ECO:0007744" key="15">
    <source>
        <dbReference type="PDB" id="6KBN"/>
    </source>
</evidence>
<evidence type="ECO:0007744" key="16">
    <source>
    </source>
</evidence>
<evidence type="ECO:0007744" key="17">
    <source>
    </source>
</evidence>
<evidence type="ECO:0007744" key="18">
    <source>
    </source>
</evidence>
<evidence type="ECO:0007744" key="19">
    <source>
    </source>
</evidence>
<evidence type="ECO:0007829" key="20">
    <source>
        <dbReference type="PDB" id="6KBM"/>
    </source>
</evidence>
<evidence type="ECO:0007829" key="21">
    <source>
        <dbReference type="PDB" id="6KBN"/>
    </source>
</evidence>
<evidence type="ECO:0007829" key="22">
    <source>
        <dbReference type="PDB" id="7YCJ"/>
    </source>
</evidence>
<sequence length="578" mass="63208">MGSCCSCLKDSSDEASVSPIADNEREAVTLLLGYLEDKDQLDFYSGGPLKALTTLVYSDNLNLQRSAALAFAEITEKYVRQVSREVLEPILILLQSQDPQIQVAACAALGNLAVNNENKLLIVEMGGLEPLINQMMGDNVEVQCNAVGCITNLATRDDNKHKIATSGALIPLTKLAKSKHIRVQRNATGALLNMTHSEENRKELVNAGAVPVLVSLLSSTDPDVQYYCTTALSNIAVDEANRKKLAQTEPRLVSKLVSLMDSPSSRVKCQATLALRNLASDTSYQLEIVRAGGLPHLVKLIQSDSIPLVLASVACIRNISIHPLNEGLIVDAGFLKPLVRLLDYKDSEEIQCHAVSTLRNLAASSEKNRKEFFESGAVEKCKELALDSPVSVQSEISACFAILALADVSKLDLLEANILDALIPMTFSQNQEVSGNAAAALANLCSRVNNYTKIIEAWDRPNEGIRGFLIRFLKSDYATFEHIALWTILQLLESHNDKVEDLVKNDDDIINGVRKMADVTFERLQRSGIDVKNPGSNNNPSSNDNNSNNNDTGSEHQPVEDASLELYNITQQILQFLH</sequence>
<feature type="initiator methionine" description="Removed">
    <location>
        <position position="1"/>
    </location>
</feature>
<feature type="chain" id="PRO_0000064302" description="Vacuolar protein 8">
    <location>
        <begin position="2"/>
        <end position="578"/>
    </location>
</feature>
<feature type="repeat" description="ARM 1">
    <location>
        <begin position="37"/>
        <end position="75"/>
    </location>
</feature>
<feature type="repeat" description="ARM 2">
    <location>
        <begin position="76"/>
        <end position="114"/>
    </location>
</feature>
<feature type="repeat" description="ARM 3">
    <location>
        <begin position="116"/>
        <end position="155"/>
    </location>
</feature>
<feature type="repeat" description="ARM 4">
    <location>
        <begin position="157"/>
        <end position="196"/>
    </location>
</feature>
<feature type="repeat" description="ARM 5">
    <location>
        <begin position="198"/>
        <end position="237"/>
    </location>
</feature>
<feature type="repeat" description="ARM 6">
    <location>
        <begin position="239"/>
        <end position="280"/>
    </location>
</feature>
<feature type="repeat" description="ARM 7">
    <location>
        <begin position="282"/>
        <end position="321"/>
    </location>
</feature>
<feature type="repeat" description="ARM 8">
    <location>
        <begin position="323"/>
        <end position="363"/>
    </location>
</feature>
<feature type="repeat" description="ARM 9">
    <location>
        <begin position="407"/>
        <end position="446"/>
    </location>
</feature>
<feature type="region of interest" description="Disordered" evidence="1">
    <location>
        <begin position="527"/>
        <end position="557"/>
    </location>
</feature>
<feature type="compositionally biased region" description="Low complexity" evidence="1">
    <location>
        <begin position="533"/>
        <end position="552"/>
    </location>
</feature>
<feature type="modified residue" description="Phosphoserine" evidence="18">
    <location>
        <position position="11"/>
    </location>
</feature>
<feature type="modified residue" description="Phosphoserine" evidence="16 17 18">
    <location>
        <position position="16"/>
    </location>
</feature>
<feature type="lipid moiety-binding region" description="N-myristoyl glycine" evidence="10">
    <location>
        <position position="2"/>
    </location>
</feature>
<feature type="lipid moiety-binding region" description="S-palmitoyl cysteine" evidence="12">
    <location>
        <position position="4"/>
    </location>
</feature>
<feature type="lipid moiety-binding region" description="S-palmitoyl cysteine" evidence="12">
    <location>
        <position position="5"/>
    </location>
</feature>
<feature type="lipid moiety-binding region" description="S-palmitoyl cysteine" evidence="12">
    <location>
        <position position="7"/>
    </location>
</feature>
<feature type="cross-link" description="Glycyl lysine isopeptide (Lys-Gly) (interchain with G-Cter in ubiquitin)" evidence="19">
    <location>
        <position position="77"/>
    </location>
</feature>
<feature type="cross-link" description="Glycyl lysine isopeptide (Lys-Gly) (interchain with G-Cter in ubiquitin)" evidence="19">
    <location>
        <position position="515"/>
    </location>
</feature>
<feature type="mutagenesis site" description="In VAC8-3; not palmitoylated." evidence="10">
    <original>CCSC</original>
    <variation>GTSS</variation>
    <location>
        <begin position="4"/>
        <end position="7"/>
    </location>
</feature>
<feature type="mutagenesis site" description="Fails to undergo self-association in the presence of NVJ1 or ATG13." evidence="9">
    <original>A</original>
    <variation>R</variation>
    <location>
        <position position="51"/>
    </location>
</feature>
<feature type="mutagenesis site" description="Fails to support the Cvt pathway, but does not affect the PMN pathway; when associated with R-62." evidence="9">
    <original>N</original>
    <variation>R</variation>
    <location>
        <position position="60"/>
    </location>
</feature>
<feature type="mutagenesis site" description="Does not affect self-association in the presence of NVJ1 but fails to undergo self-association in the presence of ATG13. Fails to support the cvt pathway, but does not affect the PMN pathway; when associated with R-60." evidence="9">
    <original>N</original>
    <variation>R</variation>
    <location>
        <position position="62"/>
    </location>
</feature>
<feature type="helix" evidence="22">
    <location>
        <begin position="22"/>
        <end position="36"/>
    </location>
</feature>
<feature type="turn" evidence="20">
    <location>
        <begin position="38"/>
        <end position="40"/>
    </location>
</feature>
<feature type="turn" evidence="22">
    <location>
        <begin position="43"/>
        <end position="45"/>
    </location>
</feature>
<feature type="helix" evidence="22">
    <location>
        <begin position="47"/>
        <end position="55"/>
    </location>
</feature>
<feature type="helix" evidence="22">
    <location>
        <begin position="61"/>
        <end position="77"/>
    </location>
</feature>
<feature type="helix" evidence="22">
    <location>
        <begin position="84"/>
        <end position="94"/>
    </location>
</feature>
<feature type="helix" evidence="22">
    <location>
        <begin position="99"/>
        <end position="112"/>
    </location>
</feature>
<feature type="helix" evidence="22">
    <location>
        <begin position="116"/>
        <end position="124"/>
    </location>
</feature>
<feature type="turn" evidence="22">
    <location>
        <begin position="125"/>
        <end position="127"/>
    </location>
</feature>
<feature type="helix" evidence="22">
    <location>
        <begin position="128"/>
        <end position="136"/>
    </location>
</feature>
<feature type="helix" evidence="22">
    <location>
        <begin position="140"/>
        <end position="153"/>
    </location>
</feature>
<feature type="helix" evidence="22">
    <location>
        <begin position="157"/>
        <end position="165"/>
    </location>
</feature>
<feature type="turn" evidence="22">
    <location>
        <begin position="166"/>
        <end position="168"/>
    </location>
</feature>
<feature type="helix" evidence="22">
    <location>
        <begin position="169"/>
        <end position="175"/>
    </location>
</feature>
<feature type="helix" evidence="22">
    <location>
        <begin position="181"/>
        <end position="193"/>
    </location>
</feature>
<feature type="helix" evidence="22">
    <location>
        <begin position="198"/>
        <end position="206"/>
    </location>
</feature>
<feature type="helix" evidence="22">
    <location>
        <begin position="209"/>
        <end position="215"/>
    </location>
</feature>
<feature type="helix" evidence="22">
    <location>
        <begin position="216"/>
        <end position="218"/>
    </location>
</feature>
<feature type="helix" evidence="22">
    <location>
        <begin position="222"/>
        <end position="235"/>
    </location>
</feature>
<feature type="helix" evidence="22">
    <location>
        <begin position="239"/>
        <end position="248"/>
    </location>
</feature>
<feature type="helix" evidence="22">
    <location>
        <begin position="252"/>
        <end position="259"/>
    </location>
</feature>
<feature type="helix" evidence="22">
    <location>
        <begin position="265"/>
        <end position="277"/>
    </location>
</feature>
<feature type="helix" evidence="22">
    <location>
        <begin position="282"/>
        <end position="290"/>
    </location>
</feature>
<feature type="helix" evidence="22">
    <location>
        <begin position="293"/>
        <end position="300"/>
    </location>
</feature>
<feature type="helix" evidence="22">
    <location>
        <begin position="306"/>
        <end position="319"/>
    </location>
</feature>
<feature type="helix" evidence="22">
    <location>
        <begin position="323"/>
        <end position="325"/>
    </location>
</feature>
<feature type="helix" evidence="22">
    <location>
        <begin position="326"/>
        <end position="331"/>
    </location>
</feature>
<feature type="helix" evidence="22">
    <location>
        <begin position="335"/>
        <end position="340"/>
    </location>
</feature>
<feature type="helix" evidence="22">
    <location>
        <begin position="341"/>
        <end position="343"/>
    </location>
</feature>
<feature type="helix" evidence="22">
    <location>
        <begin position="348"/>
        <end position="364"/>
    </location>
</feature>
<feature type="helix" evidence="22">
    <location>
        <begin position="369"/>
        <end position="374"/>
    </location>
</feature>
<feature type="helix" evidence="22">
    <location>
        <begin position="377"/>
        <end position="386"/>
    </location>
</feature>
<feature type="helix" evidence="22">
    <location>
        <begin position="390"/>
        <end position="403"/>
    </location>
</feature>
<feature type="helix" evidence="22">
    <location>
        <begin position="407"/>
        <end position="409"/>
    </location>
</feature>
<feature type="helix" evidence="22">
    <location>
        <begin position="410"/>
        <end position="415"/>
    </location>
</feature>
<feature type="turn" evidence="22">
    <location>
        <begin position="416"/>
        <end position="418"/>
    </location>
</feature>
<feature type="helix" evidence="22">
    <location>
        <begin position="419"/>
        <end position="425"/>
    </location>
</feature>
<feature type="helix" evidence="22">
    <location>
        <begin position="431"/>
        <end position="444"/>
    </location>
</feature>
<feature type="strand" evidence="20">
    <location>
        <begin position="445"/>
        <end position="447"/>
    </location>
</feature>
<feature type="helix" evidence="22">
    <location>
        <begin position="452"/>
        <end position="456"/>
    </location>
</feature>
<feature type="strand" evidence="22">
    <location>
        <begin position="458"/>
        <end position="463"/>
    </location>
</feature>
<feature type="helix" evidence="22">
    <location>
        <begin position="466"/>
        <end position="473"/>
    </location>
</feature>
<feature type="helix" evidence="22">
    <location>
        <begin position="478"/>
        <end position="492"/>
    </location>
</feature>
<feature type="helix" evidence="22">
    <location>
        <begin position="497"/>
        <end position="504"/>
    </location>
</feature>
<feature type="helix" evidence="22">
    <location>
        <begin position="507"/>
        <end position="514"/>
    </location>
</feature>
<feature type="turn" evidence="21">
    <location>
        <begin position="525"/>
        <end position="527"/>
    </location>
</feature>
<feature type="helix" evidence="21">
    <location>
        <begin position="562"/>
        <end position="574"/>
    </location>
</feature>
<protein>
    <recommendedName>
        <fullName>Vacuolar protein 8</fullName>
    </recommendedName>
</protein>